<gene>
    <name evidence="1" type="primary">speE</name>
    <name type="ordered locus">ECIAI1_0119</name>
</gene>
<dbReference type="EC" id="2.5.1.16" evidence="1"/>
<dbReference type="EMBL" id="CU928160">
    <property type="protein sequence ID" value="CAQ97008.1"/>
    <property type="molecule type" value="Genomic_DNA"/>
</dbReference>
<dbReference type="RefSeq" id="WP_000818411.1">
    <property type="nucleotide sequence ID" value="NC_011741.1"/>
</dbReference>
<dbReference type="SMR" id="B7M162"/>
<dbReference type="GeneID" id="75202064"/>
<dbReference type="KEGG" id="ecr:ECIAI1_0119"/>
<dbReference type="HOGENOM" id="CLU_048199_0_0_6"/>
<dbReference type="UniPathway" id="UPA00248">
    <property type="reaction ID" value="UER00314"/>
</dbReference>
<dbReference type="GO" id="GO:0005829">
    <property type="term" value="C:cytosol"/>
    <property type="evidence" value="ECO:0007669"/>
    <property type="project" value="TreeGrafter"/>
</dbReference>
<dbReference type="GO" id="GO:0004766">
    <property type="term" value="F:spermidine synthase activity"/>
    <property type="evidence" value="ECO:0007669"/>
    <property type="project" value="UniProtKB-UniRule"/>
</dbReference>
<dbReference type="GO" id="GO:0008295">
    <property type="term" value="P:spermidine biosynthetic process"/>
    <property type="evidence" value="ECO:0007669"/>
    <property type="project" value="UniProtKB-UniRule"/>
</dbReference>
<dbReference type="CDD" id="cd02440">
    <property type="entry name" value="AdoMet_MTases"/>
    <property type="match status" value="1"/>
</dbReference>
<dbReference type="FunFam" id="2.30.140.10:FF:000002">
    <property type="entry name" value="Polyamine aminopropyltransferase"/>
    <property type="match status" value="1"/>
</dbReference>
<dbReference type="FunFam" id="3.40.50.150:FF:000026">
    <property type="entry name" value="Polyamine aminopropyltransferase"/>
    <property type="match status" value="1"/>
</dbReference>
<dbReference type="Gene3D" id="2.30.140.10">
    <property type="entry name" value="Spermidine synthase, tetramerisation domain"/>
    <property type="match status" value="1"/>
</dbReference>
<dbReference type="Gene3D" id="3.40.50.150">
    <property type="entry name" value="Vaccinia Virus protein VP39"/>
    <property type="match status" value="1"/>
</dbReference>
<dbReference type="HAMAP" id="MF_00198">
    <property type="entry name" value="Spermidine_synth"/>
    <property type="match status" value="1"/>
</dbReference>
<dbReference type="InterPro" id="IPR030374">
    <property type="entry name" value="PABS"/>
</dbReference>
<dbReference type="InterPro" id="IPR030373">
    <property type="entry name" value="PABS_CS"/>
</dbReference>
<dbReference type="InterPro" id="IPR029063">
    <property type="entry name" value="SAM-dependent_MTases_sf"/>
</dbReference>
<dbReference type="InterPro" id="IPR001045">
    <property type="entry name" value="Spermi_synthase"/>
</dbReference>
<dbReference type="InterPro" id="IPR035246">
    <property type="entry name" value="Spermidine_synt_N"/>
</dbReference>
<dbReference type="InterPro" id="IPR037163">
    <property type="entry name" value="Spermidine_synt_N_sf"/>
</dbReference>
<dbReference type="NCBIfam" id="NF037959">
    <property type="entry name" value="MFS_SpdSyn"/>
    <property type="match status" value="1"/>
</dbReference>
<dbReference type="NCBIfam" id="NF002010">
    <property type="entry name" value="PRK00811.1"/>
    <property type="match status" value="1"/>
</dbReference>
<dbReference type="NCBIfam" id="TIGR00417">
    <property type="entry name" value="speE"/>
    <property type="match status" value="1"/>
</dbReference>
<dbReference type="PANTHER" id="PTHR11558:SF11">
    <property type="entry name" value="SPERMIDINE SYNTHASE"/>
    <property type="match status" value="1"/>
</dbReference>
<dbReference type="PANTHER" id="PTHR11558">
    <property type="entry name" value="SPERMIDINE/SPERMINE SYNTHASE"/>
    <property type="match status" value="1"/>
</dbReference>
<dbReference type="Pfam" id="PF17284">
    <property type="entry name" value="Spermine_synt_N"/>
    <property type="match status" value="1"/>
</dbReference>
<dbReference type="Pfam" id="PF01564">
    <property type="entry name" value="Spermine_synth"/>
    <property type="match status" value="1"/>
</dbReference>
<dbReference type="SUPFAM" id="SSF53335">
    <property type="entry name" value="S-adenosyl-L-methionine-dependent methyltransferases"/>
    <property type="match status" value="1"/>
</dbReference>
<dbReference type="PROSITE" id="PS01330">
    <property type="entry name" value="PABS_1"/>
    <property type="match status" value="1"/>
</dbReference>
<dbReference type="PROSITE" id="PS51006">
    <property type="entry name" value="PABS_2"/>
    <property type="match status" value="1"/>
</dbReference>
<feature type="chain" id="PRO_1000197473" description="Polyamine aminopropyltransferase">
    <location>
        <begin position="1"/>
        <end position="288"/>
    </location>
</feature>
<feature type="domain" description="PABS" evidence="1">
    <location>
        <begin position="9"/>
        <end position="238"/>
    </location>
</feature>
<feature type="active site" description="Proton acceptor" evidence="1">
    <location>
        <position position="158"/>
    </location>
</feature>
<feature type="binding site" evidence="1">
    <location>
        <position position="33"/>
    </location>
    <ligand>
        <name>S-methyl-5'-thioadenosine</name>
        <dbReference type="ChEBI" id="CHEBI:17509"/>
    </ligand>
</feature>
<feature type="binding site" evidence="1">
    <location>
        <position position="64"/>
    </location>
    <ligand>
        <name>spermidine</name>
        <dbReference type="ChEBI" id="CHEBI:57834"/>
    </ligand>
</feature>
<feature type="binding site" evidence="1">
    <location>
        <position position="88"/>
    </location>
    <ligand>
        <name>spermidine</name>
        <dbReference type="ChEBI" id="CHEBI:57834"/>
    </ligand>
</feature>
<feature type="binding site" evidence="1">
    <location>
        <position position="108"/>
    </location>
    <ligand>
        <name>S-methyl-5'-thioadenosine</name>
        <dbReference type="ChEBI" id="CHEBI:17509"/>
    </ligand>
</feature>
<feature type="binding site" evidence="1">
    <location>
        <begin position="140"/>
        <end position="141"/>
    </location>
    <ligand>
        <name>S-methyl-5'-thioadenosine</name>
        <dbReference type="ChEBI" id="CHEBI:17509"/>
    </ligand>
</feature>
<feature type="binding site" evidence="1">
    <location>
        <begin position="158"/>
        <end position="161"/>
    </location>
    <ligand>
        <name>spermidine</name>
        <dbReference type="ChEBI" id="CHEBI:57834"/>
    </ligand>
</feature>
<feature type="binding site" evidence="1">
    <location>
        <position position="165"/>
    </location>
    <ligand>
        <name>S-methyl-5'-thioadenosine</name>
        <dbReference type="ChEBI" id="CHEBI:17509"/>
    </ligand>
</feature>
<proteinExistence type="inferred from homology"/>
<sequence>MAEKKQWHETLHDQFGQYFAVDNVLYHEKTDHQDLIIFENAAFGRVMALDGVVQTTERDEFIYHEMMTHVPLLAHGHAKHVLIIGGGDGAMLREVTRHKNVESITMVEIDAGVVSFCRQYLPNHNAGSYDDPRFKLVIDDGVNFVNQTSQTFDVIISDCTDPIGPGESLFTSAFYEGCKRCLNPGGIFVAQNGVCFLQQEEAIDSHRKLSHYFSDVGFYQAAIPTYYGGIMTFAWATDNDALRHLSTEIIQARFLASGLKCRYYNPAIHTAAFALPQYLQDALASQPS</sequence>
<evidence type="ECO:0000255" key="1">
    <source>
        <dbReference type="HAMAP-Rule" id="MF_00198"/>
    </source>
</evidence>
<reference key="1">
    <citation type="journal article" date="2009" name="PLoS Genet.">
        <title>Organised genome dynamics in the Escherichia coli species results in highly diverse adaptive paths.</title>
        <authorList>
            <person name="Touchon M."/>
            <person name="Hoede C."/>
            <person name="Tenaillon O."/>
            <person name="Barbe V."/>
            <person name="Baeriswyl S."/>
            <person name="Bidet P."/>
            <person name="Bingen E."/>
            <person name="Bonacorsi S."/>
            <person name="Bouchier C."/>
            <person name="Bouvet O."/>
            <person name="Calteau A."/>
            <person name="Chiapello H."/>
            <person name="Clermont O."/>
            <person name="Cruveiller S."/>
            <person name="Danchin A."/>
            <person name="Diard M."/>
            <person name="Dossat C."/>
            <person name="Karoui M.E."/>
            <person name="Frapy E."/>
            <person name="Garry L."/>
            <person name="Ghigo J.M."/>
            <person name="Gilles A.M."/>
            <person name="Johnson J."/>
            <person name="Le Bouguenec C."/>
            <person name="Lescat M."/>
            <person name="Mangenot S."/>
            <person name="Martinez-Jehanne V."/>
            <person name="Matic I."/>
            <person name="Nassif X."/>
            <person name="Oztas S."/>
            <person name="Petit M.A."/>
            <person name="Pichon C."/>
            <person name="Rouy Z."/>
            <person name="Ruf C.S."/>
            <person name="Schneider D."/>
            <person name="Tourret J."/>
            <person name="Vacherie B."/>
            <person name="Vallenet D."/>
            <person name="Medigue C."/>
            <person name="Rocha E.P.C."/>
            <person name="Denamur E."/>
        </authorList>
    </citation>
    <scope>NUCLEOTIDE SEQUENCE [LARGE SCALE GENOMIC DNA]</scope>
    <source>
        <strain>IAI1</strain>
    </source>
</reference>
<comment type="function">
    <text evidence="1">Catalyzes the irreversible transfer of a propylamine group from the amino donor S-adenosylmethioninamine (decarboxy-AdoMet) to putrescine (1,4-diaminobutane) to yield spermidine.</text>
</comment>
<comment type="catalytic activity">
    <reaction evidence="1">
        <text>S-adenosyl 3-(methylsulfanyl)propylamine + putrescine = S-methyl-5'-thioadenosine + spermidine + H(+)</text>
        <dbReference type="Rhea" id="RHEA:12721"/>
        <dbReference type="ChEBI" id="CHEBI:15378"/>
        <dbReference type="ChEBI" id="CHEBI:17509"/>
        <dbReference type="ChEBI" id="CHEBI:57443"/>
        <dbReference type="ChEBI" id="CHEBI:57834"/>
        <dbReference type="ChEBI" id="CHEBI:326268"/>
        <dbReference type="EC" id="2.5.1.16"/>
    </reaction>
</comment>
<comment type="pathway">
    <text evidence="1">Amine and polyamine biosynthesis; spermidine biosynthesis; spermidine from putrescine: step 1/1.</text>
</comment>
<comment type="subunit">
    <text evidence="1">Homodimer or homotetramer.</text>
</comment>
<comment type="subcellular location">
    <subcellularLocation>
        <location evidence="1">Cytoplasm</location>
    </subcellularLocation>
</comment>
<comment type="similarity">
    <text evidence="1">Belongs to the spermidine/spermine synthase family.</text>
</comment>
<organism>
    <name type="scientific">Escherichia coli O8 (strain IAI1)</name>
    <dbReference type="NCBI Taxonomy" id="585034"/>
    <lineage>
        <taxon>Bacteria</taxon>
        <taxon>Pseudomonadati</taxon>
        <taxon>Pseudomonadota</taxon>
        <taxon>Gammaproteobacteria</taxon>
        <taxon>Enterobacterales</taxon>
        <taxon>Enterobacteriaceae</taxon>
        <taxon>Escherichia</taxon>
    </lineage>
</organism>
<accession>B7M162</accession>
<protein>
    <recommendedName>
        <fullName evidence="1">Polyamine aminopropyltransferase</fullName>
    </recommendedName>
    <alternativeName>
        <fullName evidence="1">Putrescine aminopropyltransferase</fullName>
        <shortName evidence="1">PAPT</shortName>
    </alternativeName>
    <alternativeName>
        <fullName evidence="1">Spermidine synthase</fullName>
        <shortName evidence="1">SPDS</shortName>
        <shortName evidence="1">SPDSY</shortName>
        <ecNumber evidence="1">2.5.1.16</ecNumber>
    </alternativeName>
</protein>
<keyword id="KW-0963">Cytoplasm</keyword>
<keyword id="KW-0620">Polyamine biosynthesis</keyword>
<keyword id="KW-0745">Spermidine biosynthesis</keyword>
<keyword id="KW-0808">Transferase</keyword>
<name>SPEE_ECO8A</name>